<organism>
    <name type="scientific">Yersinia pestis bv. Antiqua (strain Antiqua)</name>
    <dbReference type="NCBI Taxonomy" id="360102"/>
    <lineage>
        <taxon>Bacteria</taxon>
        <taxon>Pseudomonadati</taxon>
        <taxon>Pseudomonadota</taxon>
        <taxon>Gammaproteobacteria</taxon>
        <taxon>Enterobacterales</taxon>
        <taxon>Yersiniaceae</taxon>
        <taxon>Yersinia</taxon>
    </lineage>
</organism>
<keyword id="KW-0012">Acyltransferase</keyword>
<keyword id="KW-0808">Transferase</keyword>
<accession>Q1C5T8</accession>
<protein>
    <recommendedName>
        <fullName evidence="1">Acetyltransferase YPA_2219</fullName>
        <ecNumber evidence="1">2.3.1.-</ecNumber>
    </recommendedName>
</protein>
<reference key="1">
    <citation type="journal article" date="2006" name="J. Bacteriol.">
        <title>Complete genome sequence of Yersinia pestis strains Antiqua and Nepal516: evidence of gene reduction in an emerging pathogen.</title>
        <authorList>
            <person name="Chain P.S.G."/>
            <person name="Hu P."/>
            <person name="Malfatti S.A."/>
            <person name="Radnedge L."/>
            <person name="Larimer F."/>
            <person name="Vergez L.M."/>
            <person name="Worsham P."/>
            <person name="Chu M.C."/>
            <person name="Andersen G.L."/>
        </authorList>
    </citation>
    <scope>NUCLEOTIDE SEQUENCE [LARGE SCALE GENOMIC DNA]</scope>
    <source>
        <strain>Antiqua</strain>
    </source>
</reference>
<sequence>MEIRIFQQDDFEEVILLWEHCDLLRPWNDPEMDIERKLNHDPELFLVAEVNGTIVGSVMGGYDGHRGSAYYLGVHPDYRGRGFANALISRLEKKLIARGCPKLNIMVREDNDAVIGMYEKLDYETQDTIMLGKRLIVDQEY</sequence>
<feature type="chain" id="PRO_0000298451" description="Acetyltransferase YPA_2219">
    <location>
        <begin position="1"/>
        <end position="141"/>
    </location>
</feature>
<feature type="domain" description="N-acetyltransferase" evidence="1">
    <location>
        <begin position="1"/>
        <end position="141"/>
    </location>
</feature>
<comment type="similarity">
    <text evidence="1">Belongs to the acetyltransferase family. YpeA subfamily.</text>
</comment>
<evidence type="ECO:0000255" key="1">
    <source>
        <dbReference type="HAMAP-Rule" id="MF_01127"/>
    </source>
</evidence>
<dbReference type="EC" id="2.3.1.-" evidence="1"/>
<dbReference type="EMBL" id="CP000308">
    <property type="protein sequence ID" value="ABG14184.1"/>
    <property type="molecule type" value="Genomic_DNA"/>
</dbReference>
<dbReference type="RefSeq" id="WP_002208525.1">
    <property type="nucleotide sequence ID" value="NZ_CP009906.1"/>
</dbReference>
<dbReference type="SMR" id="Q1C5T8"/>
<dbReference type="KEGG" id="ypa:YPA_2219"/>
<dbReference type="Proteomes" id="UP000001971">
    <property type="component" value="Chromosome"/>
</dbReference>
<dbReference type="GO" id="GO:0016747">
    <property type="term" value="F:acyltransferase activity, transferring groups other than amino-acyl groups"/>
    <property type="evidence" value="ECO:0007669"/>
    <property type="project" value="UniProtKB-UniRule"/>
</dbReference>
<dbReference type="CDD" id="cd04301">
    <property type="entry name" value="NAT_SF"/>
    <property type="match status" value="1"/>
</dbReference>
<dbReference type="Gene3D" id="3.40.630.30">
    <property type="match status" value="1"/>
</dbReference>
<dbReference type="HAMAP" id="MF_01127">
    <property type="entry name" value="Acetyltransf_YpeA"/>
    <property type="match status" value="1"/>
</dbReference>
<dbReference type="InterPro" id="IPR023072">
    <property type="entry name" value="Acetyltransferase_YpeA"/>
</dbReference>
<dbReference type="InterPro" id="IPR016181">
    <property type="entry name" value="Acyl_CoA_acyltransferase"/>
</dbReference>
<dbReference type="InterPro" id="IPR000182">
    <property type="entry name" value="GNAT_dom"/>
</dbReference>
<dbReference type="NCBIfam" id="NF002959">
    <property type="entry name" value="PRK03624.1"/>
    <property type="match status" value="1"/>
</dbReference>
<dbReference type="PANTHER" id="PTHR43072:SF51">
    <property type="entry name" value="ABC SUPERFAMILY TRANSPORT PROTEIN"/>
    <property type="match status" value="1"/>
</dbReference>
<dbReference type="PANTHER" id="PTHR43072">
    <property type="entry name" value="N-ACETYLTRANSFERASE"/>
    <property type="match status" value="1"/>
</dbReference>
<dbReference type="Pfam" id="PF00583">
    <property type="entry name" value="Acetyltransf_1"/>
    <property type="match status" value="1"/>
</dbReference>
<dbReference type="SUPFAM" id="SSF55729">
    <property type="entry name" value="Acyl-CoA N-acyltransferases (Nat)"/>
    <property type="match status" value="1"/>
</dbReference>
<dbReference type="PROSITE" id="PS51186">
    <property type="entry name" value="GNAT"/>
    <property type="match status" value="1"/>
</dbReference>
<name>Y2219_YERPA</name>
<proteinExistence type="inferred from homology"/>
<gene>
    <name type="ordered locus">YPA_2219</name>
</gene>